<protein>
    <recommendedName>
        <fullName evidence="1">UPF0340 protein str1894</fullName>
    </recommendedName>
</protein>
<evidence type="ECO:0000255" key="1">
    <source>
        <dbReference type="HAMAP-Rule" id="MF_00800"/>
    </source>
</evidence>
<organism>
    <name type="scientific">Streptococcus thermophilus (strain CNRZ 1066)</name>
    <dbReference type="NCBI Taxonomy" id="299768"/>
    <lineage>
        <taxon>Bacteria</taxon>
        <taxon>Bacillati</taxon>
        <taxon>Bacillota</taxon>
        <taxon>Bacilli</taxon>
        <taxon>Lactobacillales</taxon>
        <taxon>Streptococcaceae</taxon>
        <taxon>Streptococcus</taxon>
    </lineage>
</organism>
<name>Y1894_STRT1</name>
<gene>
    <name type="ordered locus">str1894</name>
</gene>
<comment type="similarity">
    <text evidence="1">Belongs to the UPF0340 family.</text>
</comment>
<accession>Q5LXU2</accession>
<feature type="chain" id="PRO_0000213027" description="UPF0340 protein str1894">
    <location>
        <begin position="1"/>
        <end position="187"/>
    </location>
</feature>
<sequence length="187" mass="20023">MMLLDLEEKTRVLIEDIVERSAIGSGSIFVLGLSSSEVIGGIIGKASSREIGQRIVKTILEVLEPKGIYLAVQGCEHLNRALVVERELALAKDLEIVNVLPTLHAGGSGQLAAFDYMEDPVEVEEILAQAGIDIGDTSIGMHVKRVQVPLRPIISELGGAHVTALASRPKLIGGARAEYLADPIRKN</sequence>
<dbReference type="EMBL" id="CP000024">
    <property type="protein sequence ID" value="AAV63407.1"/>
    <property type="molecule type" value="Genomic_DNA"/>
</dbReference>
<dbReference type="SMR" id="Q5LXU2"/>
<dbReference type="KEGG" id="stc:str1894"/>
<dbReference type="HOGENOM" id="CLU_106658_0_0_9"/>
<dbReference type="Gene3D" id="3.40.50.10360">
    <property type="entry name" value="Hypothetical protein TT1679"/>
    <property type="match status" value="1"/>
</dbReference>
<dbReference type="HAMAP" id="MF_00800">
    <property type="entry name" value="UPF0340"/>
    <property type="match status" value="1"/>
</dbReference>
<dbReference type="InterPro" id="IPR028345">
    <property type="entry name" value="Antibiotic_NAT-like"/>
</dbReference>
<dbReference type="InterPro" id="IPR006340">
    <property type="entry name" value="DUF436"/>
</dbReference>
<dbReference type="NCBIfam" id="TIGR01440">
    <property type="entry name" value="TIGR01440 family protein"/>
    <property type="match status" value="1"/>
</dbReference>
<dbReference type="Pfam" id="PF04260">
    <property type="entry name" value="DUF436"/>
    <property type="match status" value="1"/>
</dbReference>
<dbReference type="PIRSF" id="PIRSF007510">
    <property type="entry name" value="UCP007510"/>
    <property type="match status" value="1"/>
</dbReference>
<dbReference type="SUPFAM" id="SSF110710">
    <property type="entry name" value="TTHA0583/YokD-like"/>
    <property type="match status" value="1"/>
</dbReference>
<reference key="1">
    <citation type="journal article" date="2004" name="Nat. Biotechnol.">
        <title>Complete sequence and comparative genome analysis of the dairy bacterium Streptococcus thermophilus.</title>
        <authorList>
            <person name="Bolotin A."/>
            <person name="Quinquis B."/>
            <person name="Renault P."/>
            <person name="Sorokin A."/>
            <person name="Ehrlich S.D."/>
            <person name="Kulakauskas S."/>
            <person name="Lapidus A."/>
            <person name="Goltsman E."/>
            <person name="Mazur M."/>
            <person name="Pusch G.D."/>
            <person name="Fonstein M."/>
            <person name="Overbeek R."/>
            <person name="Kyprides N."/>
            <person name="Purnelle B."/>
            <person name="Prozzi D."/>
            <person name="Ngui K."/>
            <person name="Masuy D."/>
            <person name="Hancy F."/>
            <person name="Burteau S."/>
            <person name="Boutry M."/>
            <person name="Delcour J."/>
            <person name="Goffeau A."/>
            <person name="Hols P."/>
        </authorList>
    </citation>
    <scope>NUCLEOTIDE SEQUENCE [LARGE SCALE GENOMIC DNA]</scope>
    <source>
        <strain>CNRZ 1066</strain>
    </source>
</reference>
<proteinExistence type="inferred from homology"/>